<protein>
    <recommendedName>
        <fullName evidence="11">Sodium- and chloride-dependent transporter XTRP3</fullName>
    </recommendedName>
    <alternativeName>
        <fullName evidence="9">Sodium/imino-acid transporter 1</fullName>
    </alternativeName>
    <alternativeName>
        <fullName>Solute carrier family 6 member 20</fullName>
    </alternativeName>
    <alternativeName>
        <fullName>Transporter rB21A homolog</fullName>
    </alternativeName>
</protein>
<dbReference type="EMBL" id="AJ276207">
    <property type="protein sequence ID" value="CAB99310.1"/>
    <property type="molecule type" value="mRNA"/>
</dbReference>
<dbReference type="EMBL" id="AJ276208">
    <property type="protein sequence ID" value="CAB99311.1"/>
    <property type="molecule type" value="mRNA"/>
</dbReference>
<dbReference type="EMBL" id="AJ289880">
    <property type="protein sequence ID" value="CAB96872.1"/>
    <property type="molecule type" value="Genomic_DNA"/>
</dbReference>
<dbReference type="EMBL" id="AF125107">
    <property type="protein sequence ID" value="AAL75944.1"/>
    <property type="status" value="ALT_INIT"/>
    <property type="molecule type" value="mRNA"/>
</dbReference>
<dbReference type="EMBL" id="CH471055">
    <property type="protein sequence ID" value="EAW64748.1"/>
    <property type="molecule type" value="Genomic_DNA"/>
</dbReference>
<dbReference type="EMBL" id="BC126197">
    <property type="protein sequence ID" value="AAI26198.1"/>
    <property type="molecule type" value="mRNA"/>
</dbReference>
<dbReference type="EMBL" id="BC136431">
    <property type="protein sequence ID" value="AAI36432.1"/>
    <property type="molecule type" value="mRNA"/>
</dbReference>
<dbReference type="EMBL" id="AF075260">
    <property type="protein sequence ID" value="AAC27755.1"/>
    <property type="molecule type" value="mRNA"/>
</dbReference>
<dbReference type="EMBL" id="AL389979">
    <property type="protein sequence ID" value="CAB97535.1"/>
    <property type="molecule type" value="mRNA"/>
</dbReference>
<dbReference type="CCDS" id="CCDS2730.1">
    <molecule id="Q9NP91-2"/>
</dbReference>
<dbReference type="CCDS" id="CCDS43077.1">
    <molecule id="Q9NP91-1"/>
</dbReference>
<dbReference type="RefSeq" id="NP_064593.1">
    <molecule id="Q9NP91-1"/>
    <property type="nucleotide sequence ID" value="NM_020208.4"/>
</dbReference>
<dbReference type="RefSeq" id="NP_071800.1">
    <molecule id="Q9NP91-2"/>
    <property type="nucleotide sequence ID" value="NM_022405.4"/>
</dbReference>
<dbReference type="PDB" id="7Y75">
    <property type="method" value="EM"/>
    <property type="resolution" value="3.10 A"/>
    <property type="chains" value="B/D=1-592"/>
</dbReference>
<dbReference type="PDB" id="7Y76">
    <property type="method" value="EM"/>
    <property type="resolution" value="3.20 A"/>
    <property type="chains" value="B/D=1-592"/>
</dbReference>
<dbReference type="PDB" id="8I91">
    <property type="method" value="EM"/>
    <property type="resolution" value="3.30 A"/>
    <property type="chains" value="B/D=1-592"/>
</dbReference>
<dbReference type="PDB" id="8P2W">
    <property type="method" value="EM"/>
    <property type="resolution" value="3.76 A"/>
    <property type="chains" value="C=1-592"/>
</dbReference>
<dbReference type="PDB" id="8P2X">
    <property type="method" value="EM"/>
    <property type="resolution" value="3.59 A"/>
    <property type="chains" value="C/D=1-592"/>
</dbReference>
<dbReference type="PDB" id="8P2Y">
    <property type="method" value="EM"/>
    <property type="resolution" value="3.46 A"/>
    <property type="chains" value="C/D=1-592"/>
</dbReference>
<dbReference type="PDB" id="8P2Z">
    <property type="method" value="EM"/>
    <property type="resolution" value="3.50 A"/>
    <property type="chains" value="C=1-592"/>
</dbReference>
<dbReference type="PDB" id="8P30">
    <property type="method" value="EM"/>
    <property type="resolution" value="3.29 A"/>
    <property type="chains" value="C/D=1-592"/>
</dbReference>
<dbReference type="PDB" id="8P31">
    <property type="method" value="EM"/>
    <property type="resolution" value="3.24 A"/>
    <property type="chains" value="C/D=1-592"/>
</dbReference>
<dbReference type="PDB" id="8WM3">
    <property type="method" value="EM"/>
    <property type="resolution" value="3.34 A"/>
    <property type="chains" value="A/C=1-592"/>
</dbReference>
<dbReference type="PDBsum" id="7Y75"/>
<dbReference type="PDBsum" id="7Y76"/>
<dbReference type="PDBsum" id="8I91"/>
<dbReference type="PDBsum" id="8P2W"/>
<dbReference type="PDBsum" id="8P2X"/>
<dbReference type="PDBsum" id="8P2Y"/>
<dbReference type="PDBsum" id="8P2Z"/>
<dbReference type="PDBsum" id="8P30"/>
<dbReference type="PDBsum" id="8P31"/>
<dbReference type="PDBsum" id="8WM3"/>
<dbReference type="EMDB" id="EMD-17377"/>
<dbReference type="EMDB" id="EMD-17378"/>
<dbReference type="EMDB" id="EMD-17379"/>
<dbReference type="EMDB" id="EMD-17380"/>
<dbReference type="EMDB" id="EMD-17381"/>
<dbReference type="EMDB" id="EMD-17382"/>
<dbReference type="EMDB" id="EMD-33652"/>
<dbReference type="EMDB" id="EMD-33653"/>
<dbReference type="EMDB" id="EMD-35254"/>
<dbReference type="EMDB" id="EMD-37639"/>
<dbReference type="SMR" id="Q9NP91"/>
<dbReference type="BioGRID" id="120108">
    <property type="interactions" value="41"/>
</dbReference>
<dbReference type="FunCoup" id="Q9NP91">
    <property type="interactions" value="135"/>
</dbReference>
<dbReference type="IntAct" id="Q9NP91">
    <property type="interactions" value="28"/>
</dbReference>
<dbReference type="STRING" id="9606.ENSP00000346298"/>
<dbReference type="TCDB" id="2.A.22.6.8">
    <property type="family name" value="the neurotransmitter:sodium symporter (nss) family"/>
</dbReference>
<dbReference type="GlyCosmos" id="Q9NP91">
    <property type="glycosylation" value="2 sites, No reported glycans"/>
</dbReference>
<dbReference type="GlyGen" id="Q9NP91">
    <property type="glycosylation" value="2 sites"/>
</dbReference>
<dbReference type="iPTMnet" id="Q9NP91"/>
<dbReference type="PhosphoSitePlus" id="Q9NP91"/>
<dbReference type="BioMuta" id="SLC6A20"/>
<dbReference type="DMDM" id="46397768"/>
<dbReference type="jPOST" id="Q9NP91"/>
<dbReference type="MassIVE" id="Q9NP91"/>
<dbReference type="PaxDb" id="9606-ENSP00000346298"/>
<dbReference type="PeptideAtlas" id="Q9NP91"/>
<dbReference type="ProteomicsDB" id="81934">
    <molecule id="Q9NP91-1"/>
</dbReference>
<dbReference type="ProteomicsDB" id="81935">
    <molecule id="Q9NP91-2"/>
</dbReference>
<dbReference type="Antibodypedia" id="29592">
    <property type="antibodies" value="31 antibodies from 15 providers"/>
</dbReference>
<dbReference type="DNASU" id="54716"/>
<dbReference type="Ensembl" id="ENST00000353278.8">
    <molecule id="Q9NP91-2"/>
    <property type="protein sequence ID" value="ENSP00000296133.5"/>
    <property type="gene ID" value="ENSG00000163817.17"/>
</dbReference>
<dbReference type="Ensembl" id="ENST00000358525.9">
    <molecule id="Q9NP91-1"/>
    <property type="protein sequence ID" value="ENSP00000346298.4"/>
    <property type="gene ID" value="ENSG00000163817.17"/>
</dbReference>
<dbReference type="GeneID" id="54716"/>
<dbReference type="KEGG" id="hsa:54716"/>
<dbReference type="MANE-Select" id="ENST00000358525.9">
    <property type="protein sequence ID" value="ENSP00000346298.4"/>
    <property type="RefSeq nucleotide sequence ID" value="NM_020208.4"/>
    <property type="RefSeq protein sequence ID" value="NP_064593.1"/>
</dbReference>
<dbReference type="UCSC" id="uc011bai.3">
    <molecule id="Q9NP91-1"/>
    <property type="organism name" value="human"/>
</dbReference>
<dbReference type="AGR" id="HGNC:30927"/>
<dbReference type="CTD" id="54716"/>
<dbReference type="DisGeNET" id="54716"/>
<dbReference type="GeneCards" id="SLC6A20"/>
<dbReference type="HGNC" id="HGNC:30927">
    <property type="gene designation" value="SLC6A20"/>
</dbReference>
<dbReference type="HPA" id="ENSG00000163817">
    <property type="expression patterns" value="Group enriched (choroid plexus, intestine)"/>
</dbReference>
<dbReference type="MalaCards" id="SLC6A20"/>
<dbReference type="MIM" id="138500">
    <property type="type" value="phenotype"/>
</dbReference>
<dbReference type="MIM" id="242600">
    <property type="type" value="phenotype"/>
</dbReference>
<dbReference type="MIM" id="605616">
    <property type="type" value="gene"/>
</dbReference>
<dbReference type="neXtProt" id="NX_Q9NP91"/>
<dbReference type="OpenTargets" id="ENSG00000163817"/>
<dbReference type="Orphanet" id="42062">
    <property type="disease" value="Iminoglycinuria"/>
</dbReference>
<dbReference type="PharmGKB" id="PA134865308"/>
<dbReference type="VEuPathDB" id="HostDB:ENSG00000163817"/>
<dbReference type="eggNOG" id="KOG3659">
    <property type="taxonomic scope" value="Eukaryota"/>
</dbReference>
<dbReference type="GeneTree" id="ENSGT00940000155873"/>
<dbReference type="InParanoid" id="Q9NP91"/>
<dbReference type="OMA" id="YHNNFER"/>
<dbReference type="OrthoDB" id="6581954at2759"/>
<dbReference type="PAN-GO" id="Q9NP91">
    <property type="GO annotations" value="3 GO annotations based on evolutionary models"/>
</dbReference>
<dbReference type="PhylomeDB" id="Q9NP91"/>
<dbReference type="TreeFam" id="TF343812"/>
<dbReference type="PathwayCommons" id="Q9NP91"/>
<dbReference type="Reactome" id="R-HSA-352230">
    <property type="pathway name" value="Amino acid transport across the plasma membrane"/>
</dbReference>
<dbReference type="Reactome" id="R-HSA-442660">
    <property type="pathway name" value="Na+/Cl- dependent neurotransmitter transporters"/>
</dbReference>
<dbReference type="Reactome" id="R-HSA-5619101">
    <property type="pathway name" value="Variant SLC6A20 contributes towards hyperglycinuria (HG) and iminoglycinuria (IG)"/>
</dbReference>
<dbReference type="Reactome" id="R-HSA-5660686">
    <property type="pathway name" value="Variant SLC6A20 contributes towards hyperglycinuria (HG) and iminoglycinuria (IG)"/>
</dbReference>
<dbReference type="SignaLink" id="Q9NP91"/>
<dbReference type="BioGRID-ORCS" id="54716">
    <property type="hits" value="13 hits in 1151 CRISPR screens"/>
</dbReference>
<dbReference type="ChiTaRS" id="SLC6A20">
    <property type="organism name" value="human"/>
</dbReference>
<dbReference type="GeneWiki" id="SLC6A20"/>
<dbReference type="GenomeRNAi" id="54716"/>
<dbReference type="Pharos" id="Q9NP91">
    <property type="development level" value="Tbio"/>
</dbReference>
<dbReference type="PRO" id="PR:Q9NP91"/>
<dbReference type="Proteomes" id="UP000005640">
    <property type="component" value="Chromosome 3"/>
</dbReference>
<dbReference type="RNAct" id="Q9NP91">
    <property type="molecule type" value="protein"/>
</dbReference>
<dbReference type="Bgee" id="ENSG00000163817">
    <property type="expression patterns" value="Expressed in pigmented layer of retina and 124 other cell types or tissues"/>
</dbReference>
<dbReference type="ExpressionAtlas" id="Q9NP91">
    <property type="expression patterns" value="baseline and differential"/>
</dbReference>
<dbReference type="GO" id="GO:0016324">
    <property type="term" value="C:apical plasma membrane"/>
    <property type="evidence" value="ECO:0000314"/>
    <property type="project" value="ARUK-UCL"/>
</dbReference>
<dbReference type="GO" id="GO:0005886">
    <property type="term" value="C:plasma membrane"/>
    <property type="evidence" value="ECO:0000318"/>
    <property type="project" value="GO_Central"/>
</dbReference>
<dbReference type="GO" id="GO:0015171">
    <property type="term" value="F:amino acid transmembrane transporter activity"/>
    <property type="evidence" value="ECO:0000314"/>
    <property type="project" value="UniProtKB"/>
</dbReference>
<dbReference type="GO" id="GO:0015199">
    <property type="term" value="F:amino-acid betaine transmembrane transporter activity"/>
    <property type="evidence" value="ECO:0000250"/>
    <property type="project" value="ARUK-UCL"/>
</dbReference>
<dbReference type="GO" id="GO:0015188">
    <property type="term" value="F:L-isoleucine transmembrane transporter activity"/>
    <property type="evidence" value="ECO:0000250"/>
    <property type="project" value="ARUK-UCL"/>
</dbReference>
<dbReference type="GO" id="GO:0015193">
    <property type="term" value="F:L-proline transmembrane transporter activity"/>
    <property type="evidence" value="ECO:0000314"/>
    <property type="project" value="ARUK-UCL"/>
</dbReference>
<dbReference type="GO" id="GO:0015175">
    <property type="term" value="F:neutral L-amino acid transmembrane transporter activity"/>
    <property type="evidence" value="ECO:0000315"/>
    <property type="project" value="ARUK-UCL"/>
</dbReference>
<dbReference type="GO" id="GO:0005298">
    <property type="term" value="F:proline:sodium symporter activity"/>
    <property type="evidence" value="ECO:0000314"/>
    <property type="project" value="UniProtKB"/>
</dbReference>
<dbReference type="GO" id="GO:0015370">
    <property type="term" value="F:solute:sodium symporter activity"/>
    <property type="evidence" value="ECO:0000314"/>
    <property type="project" value="UniProtKB"/>
</dbReference>
<dbReference type="GO" id="GO:0089718">
    <property type="term" value="P:amino acid import across plasma membrane"/>
    <property type="evidence" value="ECO:0000250"/>
    <property type="project" value="ARUK-UCL"/>
</dbReference>
<dbReference type="GO" id="GO:0006865">
    <property type="term" value="P:amino acid transport"/>
    <property type="evidence" value="ECO:0000314"/>
    <property type="project" value="UniProtKB"/>
</dbReference>
<dbReference type="GO" id="GO:0015838">
    <property type="term" value="P:amino-acid betaine transport"/>
    <property type="evidence" value="ECO:0000250"/>
    <property type="project" value="ARUK-UCL"/>
</dbReference>
<dbReference type="GO" id="GO:1903804">
    <property type="term" value="P:glycine import across plasma membrane"/>
    <property type="evidence" value="ECO:0000314"/>
    <property type="project" value="UniProtKB"/>
</dbReference>
<dbReference type="GO" id="GO:0015816">
    <property type="term" value="P:glycine transport"/>
    <property type="evidence" value="ECO:0000315"/>
    <property type="project" value="UniProtKB"/>
</dbReference>
<dbReference type="GO" id="GO:1903806">
    <property type="term" value="P:L-isoleucine import across plasma membrane"/>
    <property type="evidence" value="ECO:0000250"/>
    <property type="project" value="ARUK-UCL"/>
</dbReference>
<dbReference type="GO" id="GO:1904271">
    <property type="term" value="P:L-proline import across plasma membrane"/>
    <property type="evidence" value="ECO:0000314"/>
    <property type="project" value="UniProtKB"/>
</dbReference>
<dbReference type="GO" id="GO:1905647">
    <property type="term" value="P:proline import across plasma membrane"/>
    <property type="evidence" value="ECO:0000315"/>
    <property type="project" value="ARUK-UCL"/>
</dbReference>
<dbReference type="GO" id="GO:0015824">
    <property type="term" value="P:proline transport"/>
    <property type="evidence" value="ECO:0000315"/>
    <property type="project" value="UniProtKB"/>
</dbReference>
<dbReference type="GO" id="GO:0035725">
    <property type="term" value="P:sodium ion transmembrane transport"/>
    <property type="evidence" value="ECO:0000318"/>
    <property type="project" value="GO_Central"/>
</dbReference>
<dbReference type="GO" id="GO:0150104">
    <property type="term" value="P:transport across blood-brain barrier"/>
    <property type="evidence" value="ECO:0000303"/>
    <property type="project" value="ARUK-UCL"/>
</dbReference>
<dbReference type="CDD" id="cd11518">
    <property type="entry name" value="SLC6sbd_SIT1"/>
    <property type="match status" value="1"/>
</dbReference>
<dbReference type="InterPro" id="IPR000175">
    <property type="entry name" value="Na/ntran_symport"/>
</dbReference>
<dbReference type="InterPro" id="IPR002438">
    <property type="entry name" value="Neutral_aa_SLC6"/>
</dbReference>
<dbReference type="InterPro" id="IPR037272">
    <property type="entry name" value="SNS_sf"/>
</dbReference>
<dbReference type="NCBIfam" id="NF037979">
    <property type="entry name" value="Na_transp"/>
    <property type="match status" value="1"/>
</dbReference>
<dbReference type="PANTHER" id="PTHR11616:SF44">
    <property type="entry name" value="SODIUM- AND CHLORIDE-DEPENDENT TRANSPORTER XTRP3"/>
    <property type="match status" value="1"/>
</dbReference>
<dbReference type="PANTHER" id="PTHR11616">
    <property type="entry name" value="SODIUM/CHLORIDE DEPENDENT TRANSPORTER"/>
    <property type="match status" value="1"/>
</dbReference>
<dbReference type="Pfam" id="PF00209">
    <property type="entry name" value="SNF"/>
    <property type="match status" value="1"/>
</dbReference>
<dbReference type="PRINTS" id="PR00176">
    <property type="entry name" value="NANEUSMPORT"/>
</dbReference>
<dbReference type="PRINTS" id="PR01206">
    <property type="entry name" value="ORPHTRNSPORT"/>
</dbReference>
<dbReference type="SUPFAM" id="SSF161070">
    <property type="entry name" value="SNF-like"/>
    <property type="match status" value="1"/>
</dbReference>
<dbReference type="PROSITE" id="PS00610">
    <property type="entry name" value="NA_NEUROTRAN_SYMP_1"/>
    <property type="match status" value="1"/>
</dbReference>
<dbReference type="PROSITE" id="PS00754">
    <property type="entry name" value="NA_NEUROTRAN_SYMP_2"/>
    <property type="match status" value="1"/>
</dbReference>
<dbReference type="PROSITE" id="PS50267">
    <property type="entry name" value="NA_NEUROTRAN_SYMP_3"/>
    <property type="match status" value="1"/>
</dbReference>
<comment type="function">
    <text evidence="3 4 5">Mediates the Na(+)- and Cl(-)-dependent uptake of imino acids such as L-proline, N-methyl-L-proline and pipecolate as well as N-methylated amino acids (PubMed:15632147, PubMed:19033659, PubMed:33428810). Also transports glycine, regulates proline and glycine homeostasis in the brain playing a role in the modulation of NMDAR currents (PubMed:33428810).</text>
</comment>
<comment type="catalytic activity">
    <reaction evidence="3 4">
        <text>L-proline(out) + chloride(out) + 2 Na(+)(out) = L-proline(in) + chloride(in) + 2 Na(+)(in)</text>
        <dbReference type="Rhea" id="RHEA:71263"/>
        <dbReference type="ChEBI" id="CHEBI:17996"/>
        <dbReference type="ChEBI" id="CHEBI:29101"/>
        <dbReference type="ChEBI" id="CHEBI:60039"/>
    </reaction>
</comment>
<comment type="catalytic activity">
    <reaction evidence="3">
        <text>L-pipecolate(out) + chloride(out) + 2 Na(+)(out) = L-pipecolate(in) + chloride(in) + 2 Na(+)(in)</text>
        <dbReference type="Rhea" id="RHEA:71267"/>
        <dbReference type="ChEBI" id="CHEBI:17996"/>
        <dbReference type="ChEBI" id="CHEBI:29101"/>
        <dbReference type="ChEBI" id="CHEBI:61185"/>
    </reaction>
</comment>
<comment type="catalytic activity">
    <reaction evidence="3">
        <text>sarcosine(out) + chloride(out) + 2 Na(+)(out) = sarcosine(in) + chloride(in) + 2 Na(+)(in)</text>
        <dbReference type="Rhea" id="RHEA:72227"/>
        <dbReference type="ChEBI" id="CHEBI:17996"/>
        <dbReference type="ChEBI" id="CHEBI:29101"/>
        <dbReference type="ChEBI" id="CHEBI:57433"/>
    </reaction>
</comment>
<comment type="catalytic activity">
    <reaction evidence="3">
        <text>N-methyl-L-proline(out) + chloride(out) + 2 Na(+)(out) = N-methyl-L-proline(in) + chloride(in) + 2 Na(+)(in)</text>
        <dbReference type="Rhea" id="RHEA:72231"/>
        <dbReference type="ChEBI" id="CHEBI:17996"/>
        <dbReference type="ChEBI" id="CHEBI:29101"/>
        <dbReference type="ChEBI" id="CHEBI:133743"/>
    </reaction>
</comment>
<comment type="catalytic activity">
    <reaction evidence="3">
        <text>2-methyl-2-(methylamino)propanoate(out) + chloride(out) + 2 Na(+)(out) = 2-methyl-2-(methylamino)propanoate(in) + chloride(in) + 2 Na(+)(in)</text>
        <dbReference type="Rhea" id="RHEA:72235"/>
        <dbReference type="ChEBI" id="CHEBI:17996"/>
        <dbReference type="ChEBI" id="CHEBI:29101"/>
        <dbReference type="ChEBI" id="CHEBI:192077"/>
    </reaction>
</comment>
<comment type="catalytic activity">
    <reaction evidence="1">
        <text>glycine betaine(out) + chloride(out) + 2 Na(+)(out) = glycine betaine(in) + chloride(in) + 2 Na(+)(in)</text>
        <dbReference type="Rhea" id="RHEA:70735"/>
        <dbReference type="ChEBI" id="CHEBI:17750"/>
        <dbReference type="ChEBI" id="CHEBI:17996"/>
        <dbReference type="ChEBI" id="CHEBI:29101"/>
    </reaction>
</comment>
<comment type="catalytic activity">
    <reaction evidence="5">
        <text>glycine(out) + chloride(out) + 2 Na(+)(out) = glycine(in) + chloride(in) + 2 Na(+)(in)</text>
        <dbReference type="Rhea" id="RHEA:70691"/>
        <dbReference type="ChEBI" id="CHEBI:17996"/>
        <dbReference type="ChEBI" id="CHEBI:29101"/>
        <dbReference type="ChEBI" id="CHEBI:57305"/>
    </reaction>
</comment>
<comment type="biophysicochemical properties">
    <molecule>Isoform 1</molecule>
    <kinetics>
        <KM evidence="5">156.8 uM for proline</KM>
        <KM evidence="5">19.7 uM for glycine</KM>
    </kinetics>
</comment>
<comment type="biophysicochemical properties">
    <molecule>Isoform 2</molecule>
    <kinetics>
        <KM evidence="5">49.03 uM for proline</KM>
        <KM evidence="5">30.98 uM for glycine</KM>
    </kinetics>
</comment>
<comment type="interaction">
    <interactant intactId="EBI-10311198">
        <id>Q9NP91</id>
    </interactant>
    <interactant intactId="EBI-10173507">
        <id>Q6UY14-3</id>
        <label>ADAMTSL4</label>
    </interactant>
    <organismsDiffer>false</organismsDiffer>
    <experiments>3</experiments>
</comment>
<comment type="interaction">
    <interactant intactId="EBI-10311198">
        <id>Q9NP91</id>
    </interactant>
    <interactant intactId="EBI-3867333">
        <id>A8MQ03</id>
        <label>CYSRT1</label>
    </interactant>
    <organismsDiffer>false</organismsDiffer>
    <experiments>3</experiments>
</comment>
<comment type="interaction">
    <interactant intactId="EBI-10311198">
        <id>Q9NP91</id>
    </interactant>
    <interactant intactId="EBI-11959885">
        <id>Q07627</id>
        <label>KRTAP1-1</label>
    </interactant>
    <organismsDiffer>false</organismsDiffer>
    <experiments>3</experiments>
</comment>
<comment type="interaction">
    <interactant intactId="EBI-10311198">
        <id>Q9NP91</id>
    </interactant>
    <interactant intactId="EBI-10172150">
        <id>P60370</id>
        <label>KRTAP10-5</label>
    </interactant>
    <organismsDiffer>false</organismsDiffer>
    <experiments>3</experiments>
</comment>
<comment type="interaction">
    <interactant intactId="EBI-10311198">
        <id>Q9NP91</id>
    </interactant>
    <interactant intactId="EBI-10172290">
        <id>P60409</id>
        <label>KRTAP10-7</label>
    </interactant>
    <organismsDiffer>false</organismsDiffer>
    <experiments>3</experiments>
</comment>
<comment type="interaction">
    <interactant intactId="EBI-10311198">
        <id>Q9NP91</id>
    </interactant>
    <interactant intactId="EBI-10171774">
        <id>P60410</id>
        <label>KRTAP10-8</label>
    </interactant>
    <organismsDiffer>false</organismsDiffer>
    <experiments>6</experiments>
</comment>
<comment type="interaction">
    <interactant intactId="EBI-10311198">
        <id>Q9NP91</id>
    </interactant>
    <interactant intactId="EBI-10172052">
        <id>P60411</id>
        <label>KRTAP10-9</label>
    </interactant>
    <organismsDiffer>false</organismsDiffer>
    <experiments>3</experiments>
</comment>
<comment type="interaction">
    <interactant intactId="EBI-10311198">
        <id>Q9NP91</id>
    </interactant>
    <interactant intactId="EBI-945833">
        <id>Q7Z3S9</id>
        <label>NOTCH2NLA</label>
    </interactant>
    <organismsDiffer>false</organismsDiffer>
    <experiments>3</experiments>
</comment>
<comment type="interaction">
    <interactant intactId="EBI-10311198">
        <id>Q9NP91</id>
    </interactant>
    <interactant intactId="EBI-22310682">
        <id>P0DPK4</id>
        <label>NOTCH2NLC</label>
    </interactant>
    <organismsDiffer>false</organismsDiffer>
    <experiments>3</experiments>
</comment>
<comment type="subcellular location">
    <subcellularLocation>
        <location evidence="1">Apical cell membrane</location>
        <topology evidence="1">Multi-pass membrane protein</topology>
    </subcellularLocation>
    <text evidence="1">Located in the apical brush border membrane of kidney proximal tubule cells and in the apical membrane of enterocytes lining the intestinal villi.</text>
</comment>
<comment type="alternative products">
    <event type="alternative splicing"/>
    <isoform>
        <id>Q9NP91-1</id>
        <name>1</name>
        <name>XT3</name>
        <name evidence="10">V1</name>
        <sequence type="displayed"/>
    </isoform>
    <isoform>
        <id>Q9NP91-2</id>
        <name>2</name>
        <name>XT3a</name>
        <name evidence="10">V2</name>
        <sequence type="described" ref="VSP_050002"/>
    </isoform>
</comment>
<comment type="tissue specificity">
    <text evidence="4 5 6">Kidney and small intestine. Expressed in the S3 segment of the proximal tubule. Expressed in neurons (PubMed:33428810).</text>
</comment>
<comment type="disease" evidence="4">
    <disease id="DI-02939">
        <name>Hyperglycinuria</name>
        <acronym>HGLY</acronym>
        <description>A condition characterized by excess of glycine in the urine. In some cases it is associated with renal colic and renal oxalate stones.</description>
        <dbReference type="MIM" id="138500"/>
    </disease>
    <text>The disease is caused by variants affecting the gene represented in this entry.</text>
</comment>
<comment type="disease" evidence="4">
    <disease id="DI-02940">
        <name>Iminoglycinuria</name>
        <acronym>IG</acronym>
        <description>A disorder of renal tubular reabsorption of glycine and imino acids (proline and hydroxyproline), marked by excessive levels of all three substances in the urine.</description>
        <dbReference type="MIM" id="242600"/>
    </disease>
    <text>The disease is caused by variants affecting the gene represented in this entry. Haploinsufficiency of SLC6A20 combined with deficiency of the neutral amino acid transporter SLC6A19 or partially inactivating mutations in SLC36A2, is responsible for iminoglycinuria. Additional polymorphisms and mutations in SLC6A18 can contribute to the IG phenotype in some families.</text>
</comment>
<comment type="similarity">
    <text evidence="11">Belongs to the sodium:neurotransmitter symporter (SNF) (TC 2.A.22) family. SLC6A20 subfamily.</text>
</comment>
<comment type="sequence caution" evidence="11">
    <conflict type="erroneous initiation">
        <sequence resource="EMBL-CDS" id="AAL75944"/>
    </conflict>
    <text>Extended N-terminus.</text>
</comment>
<gene>
    <name evidence="12" type="primary">SLC6A20</name>
    <name evidence="9" type="synonym">SIT1</name>
    <name type="synonym">XT3</name>
    <name type="synonym">XTRP3</name>
</gene>
<keyword id="KW-0002">3D-structure</keyword>
<keyword id="KW-0025">Alternative splicing</keyword>
<keyword id="KW-0029">Amino-acid transport</keyword>
<keyword id="KW-1003">Cell membrane</keyword>
<keyword id="KW-0325">Glycoprotein</keyword>
<keyword id="KW-0472">Membrane</keyword>
<keyword id="KW-1267">Proteomics identification</keyword>
<keyword id="KW-1185">Reference proteome</keyword>
<keyword id="KW-0769">Symport</keyword>
<keyword id="KW-0812">Transmembrane</keyword>
<keyword id="KW-1133">Transmembrane helix</keyword>
<keyword id="KW-0813">Transport</keyword>
<feature type="chain" id="PRO_0000214812" description="Sodium- and chloride-dependent transporter XTRP3">
    <location>
        <begin position="1"/>
        <end position="592"/>
    </location>
</feature>
<feature type="topological domain" description="Cytoplasmic" evidence="2">
    <location>
        <begin position="1"/>
        <end position="5"/>
    </location>
</feature>
<feature type="transmembrane region" description="Helical; Name=1" evidence="2">
    <location>
        <begin position="6"/>
        <end position="26"/>
    </location>
</feature>
<feature type="topological domain" description="Extracellular" evidence="2">
    <location>
        <begin position="27"/>
        <end position="42"/>
    </location>
</feature>
<feature type="transmembrane region" description="Helical; Name=2" evidence="2">
    <location>
        <begin position="43"/>
        <end position="63"/>
    </location>
</feature>
<feature type="topological domain" description="Cytoplasmic" evidence="2">
    <location>
        <begin position="64"/>
        <end position="79"/>
    </location>
</feature>
<feature type="transmembrane region" description="Helical; Name=3" evidence="2">
    <location>
        <begin position="80"/>
        <end position="100"/>
    </location>
</feature>
<feature type="topological domain" description="Extracellular" evidence="2">
    <location>
        <begin position="101"/>
        <end position="165"/>
    </location>
</feature>
<feature type="transmembrane region" description="Helical; Name=4" evidence="2">
    <location>
        <begin position="166"/>
        <end position="186"/>
    </location>
</feature>
<feature type="topological domain" description="Cytoplasmic" evidence="2">
    <location>
        <begin position="187"/>
        <end position="194"/>
    </location>
</feature>
<feature type="transmembrane region" description="Helical; Name=5" evidence="2">
    <location>
        <begin position="195"/>
        <end position="215"/>
    </location>
</feature>
<feature type="topological domain" description="Extracellular" evidence="2">
    <location>
        <begin position="216"/>
        <end position="241"/>
    </location>
</feature>
<feature type="transmembrane region" description="Helical; Name=6" evidence="2">
    <location>
        <begin position="242"/>
        <end position="262"/>
    </location>
</feature>
<feature type="topological domain" description="Cytoplasmic" evidence="2">
    <location>
        <begin position="263"/>
        <end position="276"/>
    </location>
</feature>
<feature type="transmembrane region" description="Helical; Name=7" evidence="2">
    <location>
        <begin position="277"/>
        <end position="297"/>
    </location>
</feature>
<feature type="topological domain" description="Extracellular" evidence="2">
    <location>
        <begin position="298"/>
        <end position="389"/>
    </location>
</feature>
<feature type="transmembrane region" description="Helical; Name=8" evidence="2">
    <location>
        <begin position="390"/>
        <end position="410"/>
    </location>
</feature>
<feature type="topological domain" description="Cytoplasmic" evidence="2">
    <location>
        <begin position="411"/>
        <end position="431"/>
    </location>
</feature>
<feature type="transmembrane region" description="Helical; Name=9" evidence="2">
    <location>
        <begin position="432"/>
        <end position="452"/>
    </location>
</feature>
<feature type="topological domain" description="Extracellular" evidence="2">
    <location>
        <begin position="453"/>
        <end position="465"/>
    </location>
</feature>
<feature type="transmembrane region" description="Helical; Name=10" evidence="2">
    <location>
        <begin position="466"/>
        <end position="486"/>
    </location>
</feature>
<feature type="topological domain" description="Cytoplasmic" evidence="2">
    <location>
        <begin position="487"/>
        <end position="504"/>
    </location>
</feature>
<feature type="transmembrane region" description="Helical; Name=11" evidence="2">
    <location>
        <begin position="505"/>
        <end position="525"/>
    </location>
</feature>
<feature type="topological domain" description="Extracellular" evidence="2">
    <location>
        <begin position="526"/>
        <end position="554"/>
    </location>
</feature>
<feature type="transmembrane region" description="Helical; Name=12" evidence="2">
    <location>
        <begin position="555"/>
        <end position="575"/>
    </location>
</feature>
<feature type="topological domain" description="Cytoplasmic" evidence="2">
    <location>
        <begin position="576"/>
        <end position="592"/>
    </location>
</feature>
<feature type="glycosylation site" description="N-linked (GlcNAc...) asparagine" evidence="2">
    <location>
        <position position="131"/>
    </location>
</feature>
<feature type="glycosylation site" description="N-linked (GlcNAc...) asparagine" evidence="2">
    <location>
        <position position="357"/>
    </location>
</feature>
<feature type="splice variant" id="VSP_050002" description="In isoform 2." evidence="7 8">
    <location>
        <begin position="195"/>
        <end position="231"/>
    </location>
</feature>
<feature type="sequence variant" id="VAR_021862" description="In dbSNP:rs2271615.">
    <original>A</original>
    <variation>G</variation>
    <location>
        <position position="9"/>
    </location>
</feature>
<feature type="sequence variant" id="VAR_052068" description="Common variant that contributes to hyperglycinuria and iminoglycinuria in patients carrying variants in SLC36A2, SLC6A19 or SLC6A18; results in SLC6A20 inactivation due to a 8-fold decrease of Vmax; dbSNP:rs17279437." evidence="4">
    <original>T</original>
    <variation>M</variation>
    <location>
        <position position="199"/>
    </location>
</feature>
<feature type="sequence conflict" description="In Ref. 2; AAC27755." evidence="11" ref="2">
    <original>F</original>
    <variation>N</variation>
    <location>
        <position position="31"/>
    </location>
</feature>
<feature type="sequence conflict" description="In Ref. 2; AAC27755." evidence="11" ref="2">
    <original>L</original>
    <variation>V</variation>
    <location>
        <position position="217"/>
    </location>
</feature>
<feature type="helix" evidence="13">
    <location>
        <begin position="12"/>
        <end position="22"/>
    </location>
</feature>
<feature type="turn" evidence="13">
    <location>
        <begin position="26"/>
        <end position="29"/>
    </location>
</feature>
<feature type="helix" evidence="13">
    <location>
        <begin position="30"/>
        <end position="37"/>
    </location>
</feature>
<feature type="turn" evidence="17">
    <location>
        <begin position="38"/>
        <end position="40"/>
    </location>
</feature>
<feature type="helix" evidence="13">
    <location>
        <begin position="41"/>
        <end position="54"/>
    </location>
</feature>
<feature type="helix" evidence="13">
    <location>
        <begin position="57"/>
        <end position="69"/>
    </location>
</feature>
<feature type="helix" evidence="13">
    <location>
        <begin position="73"/>
        <end position="80"/>
    </location>
</feature>
<feature type="helix" evidence="13">
    <location>
        <begin position="82"/>
        <end position="84"/>
    </location>
</feature>
<feature type="helix" evidence="13">
    <location>
        <begin position="86"/>
        <end position="114"/>
    </location>
</feature>
<feature type="strand" evidence="13">
    <location>
        <begin position="117"/>
        <end position="120"/>
    </location>
</feature>
<feature type="helix" evidence="14">
    <location>
        <begin position="122"/>
        <end position="124"/>
    </location>
</feature>
<feature type="strand" evidence="13">
    <location>
        <begin position="132"/>
        <end position="135"/>
    </location>
</feature>
<feature type="helix" evidence="13">
    <location>
        <begin position="138"/>
        <end position="141"/>
    </location>
</feature>
<feature type="helix" evidence="13">
    <location>
        <begin position="144"/>
        <end position="150"/>
    </location>
</feature>
<feature type="turn" evidence="17">
    <location>
        <begin position="151"/>
        <end position="153"/>
    </location>
</feature>
<feature type="strand" evidence="13">
    <location>
        <begin position="158"/>
        <end position="161"/>
    </location>
</feature>
<feature type="helix" evidence="13">
    <location>
        <begin position="169"/>
        <end position="186"/>
    </location>
</feature>
<feature type="helix" evidence="15">
    <location>
        <begin position="189"/>
        <end position="191"/>
    </location>
</feature>
<feature type="helix" evidence="16">
    <location>
        <begin position="192"/>
        <end position="195"/>
    </location>
</feature>
<feature type="helix" evidence="13">
    <location>
        <begin position="196"/>
        <end position="199"/>
    </location>
</feature>
<feature type="helix" evidence="13">
    <location>
        <begin position="202"/>
        <end position="215"/>
    </location>
</feature>
<feature type="turn" evidence="14">
    <location>
        <begin position="218"/>
        <end position="220"/>
    </location>
</feature>
<feature type="helix" evidence="13">
    <location>
        <begin position="221"/>
        <end position="228"/>
    </location>
</feature>
<feature type="turn" evidence="17">
    <location>
        <begin position="233"/>
        <end position="236"/>
    </location>
</feature>
<feature type="helix" evidence="13">
    <location>
        <begin position="238"/>
        <end position="252"/>
    </location>
</feature>
<feature type="turn" evidence="13">
    <location>
        <begin position="253"/>
        <end position="257"/>
    </location>
</feature>
<feature type="helix" evidence="13">
    <location>
        <begin position="258"/>
        <end position="262"/>
    </location>
</feature>
<feature type="strand" evidence="17">
    <location>
        <begin position="268"/>
        <end position="270"/>
    </location>
</feature>
<feature type="helix" evidence="13">
    <location>
        <begin position="272"/>
        <end position="320"/>
    </location>
</feature>
<feature type="turn" evidence="17">
    <location>
        <begin position="325"/>
        <end position="327"/>
    </location>
</feature>
<feature type="strand" evidence="13">
    <location>
        <begin position="330"/>
        <end position="332"/>
    </location>
</feature>
<feature type="helix" evidence="13">
    <location>
        <begin position="333"/>
        <end position="339"/>
    </location>
</feature>
<feature type="turn" evidence="14">
    <location>
        <begin position="340"/>
        <end position="343"/>
    </location>
</feature>
<feature type="helix" evidence="13">
    <location>
        <begin position="345"/>
        <end position="349"/>
    </location>
</feature>
<feature type="helix" evidence="13">
    <location>
        <begin position="350"/>
        <end position="354"/>
    </location>
</feature>
<feature type="helix" evidence="13">
    <location>
        <begin position="360"/>
        <end position="365"/>
    </location>
</feature>
<feature type="strand" evidence="13">
    <location>
        <begin position="366"/>
        <end position="368"/>
    </location>
</feature>
<feature type="helix" evidence="13">
    <location>
        <begin position="373"/>
        <end position="378"/>
    </location>
</feature>
<feature type="turn" evidence="13">
    <location>
        <begin position="379"/>
        <end position="384"/>
    </location>
</feature>
<feature type="strand" evidence="13">
    <location>
        <begin position="385"/>
        <end position="387"/>
    </location>
</feature>
<feature type="helix" evidence="13">
    <location>
        <begin position="388"/>
        <end position="415"/>
    </location>
</feature>
<feature type="turn" evidence="13">
    <location>
        <begin position="416"/>
        <end position="418"/>
    </location>
</feature>
<feature type="turn" evidence="13">
    <location>
        <begin position="422"/>
        <end position="424"/>
    </location>
</feature>
<feature type="strand" evidence="13">
    <location>
        <begin position="425"/>
        <end position="428"/>
    </location>
</feature>
<feature type="helix" evidence="13">
    <location>
        <begin position="430"/>
        <end position="444"/>
    </location>
</feature>
<feature type="helix" evidence="13">
    <location>
        <begin position="445"/>
        <end position="449"/>
    </location>
</feature>
<feature type="helix" evidence="13">
    <location>
        <begin position="453"/>
        <end position="482"/>
    </location>
</feature>
<feature type="turn" evidence="13">
    <location>
        <begin position="483"/>
        <end position="485"/>
    </location>
</feature>
<feature type="helix" evidence="13">
    <location>
        <begin position="486"/>
        <end position="497"/>
    </location>
</feature>
<feature type="strand" evidence="18">
    <location>
        <begin position="500"/>
        <end position="502"/>
    </location>
</feature>
<feature type="helix" evidence="13">
    <location>
        <begin position="503"/>
        <end position="510"/>
    </location>
</feature>
<feature type="helix" evidence="13">
    <location>
        <begin position="512"/>
        <end position="529"/>
    </location>
</feature>
<feature type="strand" evidence="17">
    <location>
        <begin position="535"/>
        <end position="540"/>
    </location>
</feature>
<feature type="turn" evidence="13">
    <location>
        <begin position="541"/>
        <end position="543"/>
    </location>
</feature>
<feature type="strand" evidence="17">
    <location>
        <begin position="545"/>
        <end position="550"/>
    </location>
</feature>
<feature type="helix" evidence="13">
    <location>
        <begin position="553"/>
        <end position="567"/>
    </location>
</feature>
<feature type="helix" evidence="13">
    <location>
        <begin position="570"/>
        <end position="579"/>
    </location>
</feature>
<feature type="turn" evidence="13">
    <location>
        <begin position="580"/>
        <end position="582"/>
    </location>
</feature>
<sequence length="592" mass="65914">MEKARPLWANSLQFVFACISYAVGLGNVWRFPYLCQMYGGGSFLVPYIIMLIVEGMPLLYLELAVGQRMRQGSIGAWRTISPYLSGVGVASVVVSFFLSMYYNVINAWAFWYLFHSFQDPLPWSVCPLNGNHTGYDEECEKASSTQYFWYRKTLNISPSLQENGGVQWEPALCLLLAWLVVYLCILRGTESTGKVVYFTASLPYCVLIIYLIRGLTLHGATNGLMYMFTPKIEQLANPKAWINAATQIFFSLGLGFGSLIAFASYNEPSNNCQKHAIIVSLINSFTSIFASIVTFSIYGFKATFNYENCLKKVSLLLTNTFDLEDGFLTASNLEQVKGYLASAYPSKYSEMFPQIKNCSLESELDTAVQGTGLAFIVYTEAIKNMEVSQLWSVLYFFMLLMLGIGSMLGNTAAILTPLTDSKIISSHLPKEAISGLVCLVNCAIGMVFTMEAGNYWFDIFNDYAATLSLLLIVLVETIAVCYVYGLRRFESDLKAMTGRAVSWYWKVMWAGVSPLLIVSLFVFYLSDYILTGTLKYQAWDASQGQLVTKDYPAYALAVIGLLVASSTMCIPLAALGTFVQRRLKRGDADPVA</sequence>
<name>S6A20_HUMAN</name>
<reference key="1">
    <citation type="journal article" date="2001" name="Genomics">
        <title>The LZTFL1 gene is a part of a transcriptional map covering 250 kb within the common eliminated region 1 (C3CER1) in 3p21.3.</title>
        <authorList>
            <person name="Kiss H."/>
            <person name="Kedra D."/>
            <person name="Kiss C."/>
            <person name="Kost-Alimova M."/>
            <person name="Yang Y."/>
            <person name="Klein G."/>
            <person name="Imreh S."/>
            <person name="Dumanski J.P."/>
        </authorList>
    </citation>
    <scope>NUCLEOTIDE SEQUENCE [GENOMIC DNA / MRNA] (ISOFORMS 1 AND 2)</scope>
</reference>
<reference key="2">
    <citation type="submission" date="2002-02" db="EMBL/GenBank/DDBJ databases">
        <title>Cloning of a new human cDNA similar to Rattus norvegicus neurotransmitter transporter rB21a.</title>
        <authorList>
            <person name="Zhou Y."/>
            <person name="Yu L."/>
            <person name="Zhao S.Y."/>
        </authorList>
    </citation>
    <scope>NUCLEOTIDE SEQUENCE [MRNA]</scope>
</reference>
<reference key="3">
    <citation type="submission" date="2005-07" db="EMBL/GenBank/DDBJ databases">
        <authorList>
            <person name="Mural R.J."/>
            <person name="Istrail S."/>
            <person name="Sutton G.G."/>
            <person name="Florea L."/>
            <person name="Halpern A.L."/>
            <person name="Mobarry C.M."/>
            <person name="Lippert R."/>
            <person name="Walenz B."/>
            <person name="Shatkay H."/>
            <person name="Dew I."/>
            <person name="Miller J.R."/>
            <person name="Flanigan M.J."/>
            <person name="Edwards N.J."/>
            <person name="Bolanos R."/>
            <person name="Fasulo D."/>
            <person name="Halldorsson B.V."/>
            <person name="Hannenhalli S."/>
            <person name="Turner R."/>
            <person name="Yooseph S."/>
            <person name="Lu F."/>
            <person name="Nusskern D.R."/>
            <person name="Shue B.C."/>
            <person name="Zheng X.H."/>
            <person name="Zhong F."/>
            <person name="Delcher A.L."/>
            <person name="Huson D.H."/>
            <person name="Kravitz S.A."/>
            <person name="Mouchard L."/>
            <person name="Reinert K."/>
            <person name="Remington K.A."/>
            <person name="Clark A.G."/>
            <person name="Waterman M.S."/>
            <person name="Eichler E.E."/>
            <person name="Adams M.D."/>
            <person name="Hunkapiller M.W."/>
            <person name="Myers E.W."/>
            <person name="Venter J.C."/>
        </authorList>
    </citation>
    <scope>NUCLEOTIDE SEQUENCE [LARGE SCALE GENOMIC DNA]</scope>
</reference>
<reference key="4">
    <citation type="journal article" date="2004" name="Genome Res.">
        <title>The status, quality, and expansion of the NIH full-length cDNA project: the Mammalian Gene Collection (MGC).</title>
        <authorList>
            <consortium name="The MGC Project Team"/>
        </authorList>
    </citation>
    <scope>NUCLEOTIDE SEQUENCE [LARGE SCALE MRNA] (ISOFORMS 1 AND 2)</scope>
</reference>
<reference key="5">
    <citation type="journal article" date="1998" name="Recept. Channels">
        <title>Cloning, gene structure, and genomic localization of an orphan transporter from mouse kidney with six alternatively-spliced isoforms.</title>
        <authorList>
            <person name="Nash S.R."/>
            <person name="Giros B."/>
            <person name="Kingsmore S.F."/>
            <person name="Kim K.M."/>
            <person name="El-Mestikawy S."/>
            <person name="Dong Q."/>
            <person name="Fumagalli F."/>
            <person name="Seldin M.F."/>
            <person name="Caron M.G."/>
        </authorList>
    </citation>
    <scope>NUCLEOTIDE SEQUENCE [MRNA] OF 1-315 (ISOFORM 1)</scope>
    <scope>TISSUE SPECIFICITY</scope>
</reference>
<reference key="6">
    <citation type="submission" date="2000-07" db="EMBL/GenBank/DDBJ databases">
        <authorList>
            <consortium name="The European IMAGE consortium"/>
        </authorList>
    </citation>
    <scope>NUCLEOTIDE SEQUENCE [LARGE SCALE MRNA] OF 232-592</scope>
</reference>
<reference key="7">
    <citation type="journal article" date="2005" name="J. Biol. Chem.">
        <title>Identification of mammalian proline transporter SIT1 (SLC6A20) with characteristics of classical system imino.</title>
        <authorList>
            <person name="Takanaga H."/>
            <person name="Mackenzie B."/>
            <person name="Suzuki Y."/>
            <person name="Hediger M.A."/>
        </authorList>
    </citation>
    <scope>FUNCTION</scope>
    <scope>TRANSPORTER ACTIVITY</scope>
</reference>
<reference key="8">
    <citation type="journal article" date="2021" name="EMBO Mol. Med.">
        <title>SLC6A20 transporter: a novel regulator of brain glycine homeostasis and NMDAR function.</title>
        <authorList>
            <person name="Bae M."/>
            <person name="Roh J.D."/>
            <person name="Kim Y."/>
            <person name="Kim S.S."/>
            <person name="Han H.M."/>
            <person name="Yang E."/>
            <person name="Kang H."/>
            <person name="Lee S."/>
            <person name="Kim J.Y."/>
            <person name="Kang R."/>
            <person name="Jung H."/>
            <person name="Yoo T."/>
            <person name="Kim H."/>
            <person name="Kim D."/>
            <person name="Oh H."/>
            <person name="Han S."/>
            <person name="Kim D."/>
            <person name="Han J."/>
            <person name="Bae Y.C."/>
            <person name="Kim H."/>
            <person name="Ahn S."/>
            <person name="Chan A.M."/>
            <person name="Lee D."/>
            <person name="Kim J.W."/>
            <person name="Kim E."/>
        </authorList>
    </citation>
    <scope>FUNCTION</scope>
    <scope>TISSUE SPECIFICITY</scope>
    <scope>TRANSPORTER ACTIVTITY</scope>
</reference>
<reference key="9">
    <citation type="journal article" date="2008" name="J. Clin. Invest.">
        <title>Iminoglycinuria and hyperglycinuria are discrete human phenotypes resulting from complex mutations in proline and glycine transporters.</title>
        <authorList>
            <person name="Broer S."/>
            <person name="Bailey C.G."/>
            <person name="Kowalczuk S."/>
            <person name="Ng C."/>
            <person name="Vanslambrouck J.M."/>
            <person name="Rodgers H."/>
            <person name="Auray-Blais C."/>
            <person name="Cavanaugh J.A."/>
            <person name="Broer A."/>
            <person name="Rasko J.E."/>
        </authorList>
    </citation>
    <scope>VARIANT MET-199</scope>
    <scope>CHARACTERIZATION OF VARIANT MET-199</scope>
    <scope>INVOLVEMENT IN HGLY AND IG</scope>
    <scope>FUNCTION</scope>
    <scope>TISSUE SPECIFICITY</scope>
    <scope>TRANSPORTER ACTIVITY</scope>
</reference>
<organism>
    <name type="scientific">Homo sapiens</name>
    <name type="common">Human</name>
    <dbReference type="NCBI Taxonomy" id="9606"/>
    <lineage>
        <taxon>Eukaryota</taxon>
        <taxon>Metazoa</taxon>
        <taxon>Chordata</taxon>
        <taxon>Craniata</taxon>
        <taxon>Vertebrata</taxon>
        <taxon>Euteleostomi</taxon>
        <taxon>Mammalia</taxon>
        <taxon>Eutheria</taxon>
        <taxon>Euarchontoglires</taxon>
        <taxon>Primates</taxon>
        <taxon>Haplorrhini</taxon>
        <taxon>Catarrhini</taxon>
        <taxon>Hominidae</taxon>
        <taxon>Homo</taxon>
    </lineage>
</organism>
<accession>Q9NP91</accession>
<accession>A1A4F2</accession>
<accession>O75590</accession>
<accession>Q8TF10</accession>
<accession>Q9NPQ2</accession>
<accession>Q9NQ77</accession>
<evidence type="ECO:0000250" key="1">
    <source>
        <dbReference type="UniProtKB" id="Q8VDB9"/>
    </source>
</evidence>
<evidence type="ECO:0000255" key="2"/>
<evidence type="ECO:0000269" key="3">
    <source>
    </source>
</evidence>
<evidence type="ECO:0000269" key="4">
    <source>
    </source>
</evidence>
<evidence type="ECO:0000269" key="5">
    <source>
    </source>
</evidence>
<evidence type="ECO:0000269" key="6">
    <source>
    </source>
</evidence>
<evidence type="ECO:0000303" key="7">
    <source>
    </source>
</evidence>
<evidence type="ECO:0000303" key="8">
    <source>
    </source>
</evidence>
<evidence type="ECO:0000303" key="9">
    <source>
    </source>
</evidence>
<evidence type="ECO:0000303" key="10">
    <source>
    </source>
</evidence>
<evidence type="ECO:0000305" key="11"/>
<evidence type="ECO:0000312" key="12">
    <source>
        <dbReference type="HGNC" id="HGNC:30927"/>
    </source>
</evidence>
<evidence type="ECO:0007829" key="13">
    <source>
        <dbReference type="PDB" id="7Y75"/>
    </source>
</evidence>
<evidence type="ECO:0007829" key="14">
    <source>
        <dbReference type="PDB" id="7Y76"/>
    </source>
</evidence>
<evidence type="ECO:0007829" key="15">
    <source>
        <dbReference type="PDB" id="8I91"/>
    </source>
</evidence>
<evidence type="ECO:0007829" key="16">
    <source>
        <dbReference type="PDB" id="8P2Y"/>
    </source>
</evidence>
<evidence type="ECO:0007829" key="17">
    <source>
        <dbReference type="PDB" id="8P31"/>
    </source>
</evidence>
<evidence type="ECO:0007829" key="18">
    <source>
        <dbReference type="PDB" id="8WM3"/>
    </source>
</evidence>
<proteinExistence type="evidence at protein level"/>